<proteinExistence type="evidence at protein level"/>
<keyword id="KW-0966">Cell projection</keyword>
<keyword id="KW-1015">Disulfide bond</keyword>
<keyword id="KW-1185">Reference proteome</keyword>
<keyword id="KW-0716">Sensory transduction</keyword>
<keyword id="KW-0844">Vision</keyword>
<sequence length="389" mass="42880">MSRVFKKTCSNGKLSIYLGKRDFVDHVDMVEPIDGVVLVDPEYLKGRKMFVMLTCAFRYGHDDLDVIGLTFRKDLYVQVQQVVPAESSSPRGSLTVLQERLLHKLGDNAYPFTLQMVVNLPCSVTLQPGPDDTGKACGVDFEVKSFCAENLEEKVSKRDSVRLVIRKIQFAPLEPGPGPWARLCRRFLLSAQPLLLQAWMDKEVNYHGQPISVNVSINNSTNKVIKKIKISVDQITDVVLYSLDKYTKTVFVQEFTETIAANSTFSKSFAVTPLLADNCHKQGLALDGKLKQGDTNLASSTILRPGVDKELLGILVSYKVRVNLMVSCEGILGDLTASEVGVELPLILMHPKPSNEAASSEDIVIEEFAQQEPSGESQEALAAEGNEGS</sequence>
<reference key="1">
    <citation type="journal article" date="2000" name="FEBS Lett.">
        <title>Purification and characterization of bovine cone arrestin (cArr).</title>
        <authorList>
            <person name="Maeda T."/>
            <person name="Ohguro H."/>
            <person name="Sohma H."/>
            <person name="Kuroki Y."/>
            <person name="Wada H."/>
            <person name="Okisaka S."/>
            <person name="Murakami A."/>
        </authorList>
    </citation>
    <scope>NUCLEOTIDE SEQUENCE [MRNA]</scope>
    <scope>TISSUE SPECIFICITY</scope>
    <source>
        <tissue>Retina</tissue>
    </source>
</reference>
<reference key="2">
    <citation type="journal article" date="2015" name="Free Radic. Biol. Med.">
        <title>Light-induced disulfide dimerization of recoverin under ex vivo and in vivo conditions.</title>
        <authorList>
            <person name="Zernii E.Y."/>
            <person name="Nazipova A.A."/>
            <person name="Gancharova O.S."/>
            <person name="Kazakov A.S."/>
            <person name="Serebryakova M.V."/>
            <person name="Zinchenko D.V."/>
            <person name="Tikhomirova N.K."/>
            <person name="Senin I.I."/>
            <person name="Philippov P.P."/>
            <person name="Permyakov E.A."/>
            <person name="Permyakov S.E."/>
        </authorList>
    </citation>
    <scope>SUBUNIT</scope>
    <scope>TISSUE SPECIFICITY</scope>
</reference>
<feature type="chain" id="PRO_0000250486" description="Arrestin-C">
    <location>
        <begin position="1"/>
        <end position="389"/>
    </location>
</feature>
<feature type="region of interest" description="Disordered" evidence="3">
    <location>
        <begin position="369"/>
        <end position="389"/>
    </location>
</feature>
<dbReference type="EMBL" id="D85340">
    <property type="protein sequence ID" value="BAA94344.1"/>
    <property type="status" value="ALT_INIT"/>
    <property type="molecule type" value="mRNA"/>
</dbReference>
<dbReference type="RefSeq" id="NP_776419.1">
    <property type="nucleotide sequence ID" value="NM_173994.2"/>
</dbReference>
<dbReference type="SMR" id="Q9N0H5"/>
<dbReference type="FunCoup" id="Q9N0H5">
    <property type="interactions" value="3"/>
</dbReference>
<dbReference type="STRING" id="9913.ENSBTAP00000017088"/>
<dbReference type="PaxDb" id="9913-ENSBTAP00000017088"/>
<dbReference type="GeneID" id="281011"/>
<dbReference type="KEGG" id="bta:281011"/>
<dbReference type="CTD" id="407"/>
<dbReference type="eggNOG" id="KOG3865">
    <property type="taxonomic scope" value="Eukaryota"/>
</dbReference>
<dbReference type="InParanoid" id="Q9N0H5"/>
<dbReference type="OrthoDB" id="298939at2759"/>
<dbReference type="Proteomes" id="UP000009136">
    <property type="component" value="Unplaced"/>
</dbReference>
<dbReference type="GO" id="GO:0001917">
    <property type="term" value="C:photoreceptor inner segment"/>
    <property type="evidence" value="ECO:0007669"/>
    <property type="project" value="UniProtKB-SubCell"/>
</dbReference>
<dbReference type="GO" id="GO:0001750">
    <property type="term" value="C:photoreceptor outer segment"/>
    <property type="evidence" value="ECO:0007669"/>
    <property type="project" value="UniProtKB-SubCell"/>
</dbReference>
<dbReference type="GO" id="GO:0001664">
    <property type="term" value="F:G protein-coupled receptor binding"/>
    <property type="evidence" value="ECO:0000318"/>
    <property type="project" value="GO_Central"/>
</dbReference>
<dbReference type="GO" id="GO:0002031">
    <property type="term" value="P:G protein-coupled receptor internalization"/>
    <property type="evidence" value="ECO:0000318"/>
    <property type="project" value="GO_Central"/>
</dbReference>
<dbReference type="GO" id="GO:0007165">
    <property type="term" value="P:signal transduction"/>
    <property type="evidence" value="ECO:0007669"/>
    <property type="project" value="InterPro"/>
</dbReference>
<dbReference type="GO" id="GO:0007601">
    <property type="term" value="P:visual perception"/>
    <property type="evidence" value="ECO:0000318"/>
    <property type="project" value="GO_Central"/>
</dbReference>
<dbReference type="FunFam" id="2.60.40.640:FF:000019">
    <property type="entry name" value="Arrestin 3"/>
    <property type="match status" value="1"/>
</dbReference>
<dbReference type="FunFam" id="2.60.40.840:FF:000002">
    <property type="entry name" value="Arrestin 3"/>
    <property type="match status" value="1"/>
</dbReference>
<dbReference type="Gene3D" id="2.60.40.640">
    <property type="match status" value="1"/>
</dbReference>
<dbReference type="Gene3D" id="2.60.40.840">
    <property type="match status" value="1"/>
</dbReference>
<dbReference type="InterPro" id="IPR000698">
    <property type="entry name" value="Arrestin"/>
</dbReference>
<dbReference type="InterPro" id="IPR014752">
    <property type="entry name" value="Arrestin-like_C"/>
</dbReference>
<dbReference type="InterPro" id="IPR011021">
    <property type="entry name" value="Arrestin-like_N"/>
</dbReference>
<dbReference type="InterPro" id="IPR011022">
    <property type="entry name" value="Arrestin_C-like"/>
</dbReference>
<dbReference type="InterPro" id="IPR017864">
    <property type="entry name" value="Arrestin_CS"/>
</dbReference>
<dbReference type="InterPro" id="IPR014753">
    <property type="entry name" value="Arrestin_N"/>
</dbReference>
<dbReference type="InterPro" id="IPR014756">
    <property type="entry name" value="Ig_E-set"/>
</dbReference>
<dbReference type="PANTHER" id="PTHR11792">
    <property type="entry name" value="ARRESTIN"/>
    <property type="match status" value="1"/>
</dbReference>
<dbReference type="PANTHER" id="PTHR11792:SF19">
    <property type="entry name" value="ARRESTIN-C"/>
    <property type="match status" value="1"/>
</dbReference>
<dbReference type="Pfam" id="PF02752">
    <property type="entry name" value="Arrestin_C"/>
    <property type="match status" value="1"/>
</dbReference>
<dbReference type="Pfam" id="PF00339">
    <property type="entry name" value="Arrestin_N"/>
    <property type="match status" value="1"/>
</dbReference>
<dbReference type="PRINTS" id="PR00309">
    <property type="entry name" value="ARRESTIN"/>
</dbReference>
<dbReference type="SMART" id="SM01017">
    <property type="entry name" value="Arrestin_C"/>
    <property type="match status" value="1"/>
</dbReference>
<dbReference type="SUPFAM" id="SSF81296">
    <property type="entry name" value="E set domains"/>
    <property type="match status" value="2"/>
</dbReference>
<dbReference type="PROSITE" id="PS00295">
    <property type="entry name" value="ARRESTINS"/>
    <property type="match status" value="1"/>
</dbReference>
<protein>
    <recommendedName>
        <fullName>Arrestin-C</fullName>
    </recommendedName>
    <alternativeName>
        <fullName>Cone arrestin</fullName>
        <shortName>cArr</shortName>
    </alternativeName>
    <alternativeName>
        <fullName>Retinal cone arrestin-3</fullName>
    </alternativeName>
    <alternativeName>
        <fullName>X-arrestin</fullName>
    </alternativeName>
</protein>
<name>ARRC_BOVIN</name>
<organism>
    <name type="scientific">Bos taurus</name>
    <name type="common">Bovine</name>
    <dbReference type="NCBI Taxonomy" id="9913"/>
    <lineage>
        <taxon>Eukaryota</taxon>
        <taxon>Metazoa</taxon>
        <taxon>Chordata</taxon>
        <taxon>Craniata</taxon>
        <taxon>Vertebrata</taxon>
        <taxon>Euteleostomi</taxon>
        <taxon>Mammalia</taxon>
        <taxon>Eutheria</taxon>
        <taxon>Laurasiatheria</taxon>
        <taxon>Artiodactyla</taxon>
        <taxon>Ruminantia</taxon>
        <taxon>Pecora</taxon>
        <taxon>Bovidae</taxon>
        <taxon>Bovinae</taxon>
        <taxon>Bos</taxon>
    </lineage>
</organism>
<comment type="function">
    <text>May play a role in an as yet undefined retina-specific signal transduction. Could bind to photoactivated-phosphorylated red/green opsins.</text>
</comment>
<comment type="subunit">
    <text evidence="1 5">Homodimer; disulfide-linked in response to retinal illumination (PubMed:25772009). Interacts with CXCR4; the interaction is dependent on the C-terminal phosphorylation of CXCR4 and modulates the calcium ion mobilization activity of CXCR4 (By similarity). Interacts with GPR84 (By similarity).</text>
</comment>
<comment type="subcellular location">
    <subcellularLocation>
        <location evidence="2">Photoreceptor inner segment</location>
    </subcellularLocation>
    <subcellularLocation>
        <location evidence="2">Cell projection</location>
        <location evidence="2">Cilium</location>
        <location evidence="2">Photoreceptor outer segment</location>
    </subcellularLocation>
</comment>
<comment type="tissue specificity">
    <text evidence="4 5">Expressed in cone photoreceptors in the retina (at protein level).</text>
</comment>
<comment type="similarity">
    <text evidence="6">Belongs to the arrestin family.</text>
</comment>
<comment type="sequence caution" evidence="6">
    <conflict type="erroneous initiation">
        <sequence resource="EMBL-CDS" id="BAA94344"/>
    </conflict>
</comment>
<accession>Q9N0H5</accession>
<gene>
    <name type="primary">ARR3</name>
</gene>
<evidence type="ECO:0000250" key="1">
    <source>
        <dbReference type="UniProtKB" id="P36575"/>
    </source>
</evidence>
<evidence type="ECO:0000250" key="2">
    <source>
        <dbReference type="UniProtKB" id="Q9EQP6"/>
    </source>
</evidence>
<evidence type="ECO:0000256" key="3">
    <source>
        <dbReference type="SAM" id="MobiDB-lite"/>
    </source>
</evidence>
<evidence type="ECO:0000269" key="4">
    <source>
    </source>
</evidence>
<evidence type="ECO:0000269" key="5">
    <source>
    </source>
</evidence>
<evidence type="ECO:0000305" key="6"/>